<protein>
    <recommendedName>
        <fullName>Stress-induced-phosphoprotein 1</fullName>
        <shortName>STI1</shortName>
    </recommendedName>
    <alternativeName>
        <fullName>Hsc70/Hsp90-organizing protein</fullName>
        <shortName>Hop</shortName>
    </alternativeName>
</protein>
<reference key="1">
    <citation type="journal article" date="1999" name="J. Biol. Chem.">
        <title>Bacterial lipopolysaccharide induces expression of the stress response genes hop and H411.</title>
        <authorList>
            <person name="Heine H."/>
            <person name="Delude R.L."/>
            <person name="Monks B.G."/>
            <person name="Espevik T."/>
            <person name="Golenbock D.T."/>
        </authorList>
    </citation>
    <scope>NUCLEOTIDE SEQUENCE [MRNA]</scope>
    <source>
        <tissue>Ovary</tissue>
    </source>
</reference>
<comment type="function">
    <text evidence="2 3">Acts as a co-chaperone for HSP90AA1. Mediates the association of the molecular chaperones HSPA8/HSC70 and HSP90.</text>
</comment>
<comment type="subunit">
    <text evidence="2 3 4">Probably forms a complex composed of chaperones HSP90 and HSP70, co-chaperones STIP1/HOP, CDC37, PPP5C, PTGES3/p23, TSC1 and client protein TSC2. Forms a complex with HSPA8/HSC70, HSPCA/HSP-86 and HSPCB/HSP-84. Interacts with PACRG. Interacts with EEF1AKMT3 (By similarity). Interacts with HSP90/HSP90AA1; the interaction dissociates the PPP5C:HSP90AA1 interaction. Interacts with FLCN, FNIP1 and FNIP2. Interacts with HSPA8/HSC70. Interacts with HSP90AB1; upon SMYD2-dependent HSP90AB1 methylation.</text>
</comment>
<comment type="subcellular location">
    <subcellularLocation>
        <location evidence="4">Cytoplasm</location>
    </subcellularLocation>
    <subcellularLocation>
        <location evidence="4">Nucleus</location>
    </subcellularLocation>
    <subcellularLocation>
        <location evidence="5">Dynein axonemal particle</location>
    </subcellularLocation>
</comment>
<comment type="domain">
    <text evidence="1">The TPR 1 repeat interacts with the C-terminal of HSC70. The TPR 4, 5 and 6 repeats (also called TPR2A domain) and TPR 7, 8 and 9 repeats (also called TPR2B domain) interact with HSP90 (By similarity).</text>
</comment>
<keyword id="KW-0007">Acetylation</keyword>
<keyword id="KW-0963">Cytoplasm</keyword>
<keyword id="KW-1017">Isopeptide bond</keyword>
<keyword id="KW-0539">Nucleus</keyword>
<keyword id="KW-0597">Phosphoprotein</keyword>
<keyword id="KW-0677">Repeat</keyword>
<keyword id="KW-0802">TPR repeat</keyword>
<keyword id="KW-0832">Ubl conjugation</keyword>
<evidence type="ECO:0000250" key="1"/>
<evidence type="ECO:0000250" key="2">
    <source>
        <dbReference type="UniProtKB" id="O35814"/>
    </source>
</evidence>
<evidence type="ECO:0000250" key="3">
    <source>
        <dbReference type="UniProtKB" id="P31948"/>
    </source>
</evidence>
<evidence type="ECO:0000250" key="4">
    <source>
        <dbReference type="UniProtKB" id="Q60864"/>
    </source>
</evidence>
<evidence type="ECO:0000250" key="5">
    <source>
        <dbReference type="UniProtKB" id="Q7ZWU1"/>
    </source>
</evidence>
<evidence type="ECO:0000255" key="6"/>
<evidence type="ECO:0000256" key="7">
    <source>
        <dbReference type="SAM" id="MobiDB-lite"/>
    </source>
</evidence>
<proteinExistence type="evidence at transcript level"/>
<accession>O54981</accession>
<feature type="chain" id="PRO_0000106371" description="Stress-induced-phosphoprotein 1">
    <location>
        <begin position="1"/>
        <end position="543"/>
    </location>
</feature>
<feature type="repeat" description="TPR 1">
    <location>
        <begin position="4"/>
        <end position="37"/>
    </location>
</feature>
<feature type="repeat" description="TPR 2">
    <location>
        <begin position="39"/>
        <end position="71"/>
    </location>
</feature>
<feature type="repeat" description="TPR 3">
    <location>
        <begin position="73"/>
        <end position="105"/>
    </location>
</feature>
<feature type="domain" description="STI1 1">
    <location>
        <begin position="130"/>
        <end position="169"/>
    </location>
</feature>
<feature type="repeat" description="TPR 4">
    <location>
        <begin position="225"/>
        <end position="258"/>
    </location>
</feature>
<feature type="repeat" description="TPR 5">
    <location>
        <begin position="260"/>
        <end position="292"/>
    </location>
</feature>
<feature type="repeat" description="TPR 6">
    <location>
        <begin position="300"/>
        <end position="333"/>
    </location>
</feature>
<feature type="repeat" description="TPR 7">
    <location>
        <begin position="360"/>
        <end position="393"/>
    </location>
</feature>
<feature type="repeat" description="TPR 8">
    <location>
        <begin position="395"/>
        <end position="427"/>
    </location>
</feature>
<feature type="repeat" description="TPR 9">
    <location>
        <begin position="428"/>
        <end position="461"/>
    </location>
</feature>
<feature type="domain" description="STI1 2">
    <location>
        <begin position="492"/>
        <end position="531"/>
    </location>
</feature>
<feature type="region of interest" description="Disordered" evidence="7">
    <location>
        <begin position="191"/>
        <end position="233"/>
    </location>
</feature>
<feature type="short sequence motif" description="Bipartite nuclear localization signal" evidence="6">
    <location>
        <begin position="222"/>
        <end position="239"/>
    </location>
</feature>
<feature type="compositionally biased region" description="Basic and acidic residues" evidence="7">
    <location>
        <begin position="205"/>
        <end position="233"/>
    </location>
</feature>
<feature type="modified residue" description="N-acetylmethionine" evidence="3">
    <location>
        <position position="1"/>
    </location>
</feature>
<feature type="modified residue" description="N6-acetyllysine" evidence="3">
    <location>
        <position position="8"/>
    </location>
</feature>
<feature type="modified residue" description="Phosphoserine" evidence="3">
    <location>
        <position position="16"/>
    </location>
</feature>
<feature type="modified residue" description="Phosphothreonine" evidence="3">
    <location>
        <position position="198"/>
    </location>
</feature>
<feature type="modified residue" description="N6-acetyllysine" evidence="3">
    <location>
        <position position="301"/>
    </location>
</feature>
<feature type="modified residue" description="N6-acetyllysine" evidence="3">
    <location>
        <position position="312"/>
    </location>
</feature>
<feature type="modified residue" description="N6-acetyllysine" evidence="3">
    <location>
        <position position="325"/>
    </location>
</feature>
<feature type="modified residue" description="Phosphothreonine" evidence="3">
    <location>
        <position position="332"/>
    </location>
</feature>
<feature type="modified residue" description="N6-acetyllysine" evidence="3">
    <location>
        <position position="344"/>
    </location>
</feature>
<feature type="modified residue" description="Phosphotyrosine" evidence="3">
    <location>
        <position position="354"/>
    </location>
</feature>
<feature type="modified residue" description="N6-acetyllysine" evidence="3">
    <location>
        <position position="446"/>
    </location>
</feature>
<feature type="modified residue" description="Phosphoserine" evidence="3">
    <location>
        <position position="481"/>
    </location>
</feature>
<feature type="cross-link" description="Glycyl lysine isopeptide (Lys-Gly) (interchain with G-Cter in SUMO1); alternate" evidence="3">
    <location>
        <position position="123"/>
    </location>
</feature>
<feature type="cross-link" description="Glycyl lysine isopeptide (Lys-Gly) (interchain with G-Cter in SUMO2); alternate" evidence="3">
    <location>
        <position position="123"/>
    </location>
</feature>
<feature type="cross-link" description="Glycyl lysine isopeptide (Lys-Gly) (interchain with G-Cter in SUMO1); alternate" evidence="3">
    <location>
        <position position="210"/>
    </location>
</feature>
<feature type="cross-link" description="Glycyl lysine isopeptide (Lys-Gly) (interchain with G-Cter in SUMO2); alternate" evidence="3">
    <location>
        <position position="210"/>
    </location>
</feature>
<gene>
    <name type="primary">STIP1</name>
    <name type="synonym">HOP</name>
</gene>
<dbReference type="EMBL" id="AF039202">
    <property type="protein sequence ID" value="AAB94760.1"/>
    <property type="molecule type" value="mRNA"/>
</dbReference>
<dbReference type="RefSeq" id="NP_001233607.1">
    <property type="nucleotide sequence ID" value="NM_001246678.1"/>
</dbReference>
<dbReference type="SMR" id="O54981"/>
<dbReference type="PaxDb" id="10029-NP_001233607.1"/>
<dbReference type="GeneID" id="100689413"/>
<dbReference type="KEGG" id="cge:100689413"/>
<dbReference type="CTD" id="10963"/>
<dbReference type="eggNOG" id="KOG0548">
    <property type="taxonomic scope" value="Eukaryota"/>
</dbReference>
<dbReference type="OrthoDB" id="2423701at2759"/>
<dbReference type="Proteomes" id="UP000694386">
    <property type="component" value="Unplaced"/>
</dbReference>
<dbReference type="Proteomes" id="UP001108280">
    <property type="component" value="Chromosome 3"/>
</dbReference>
<dbReference type="GO" id="GO:0120293">
    <property type="term" value="C:dynein axonemal particle"/>
    <property type="evidence" value="ECO:0000250"/>
    <property type="project" value="UniProtKB"/>
</dbReference>
<dbReference type="GO" id="GO:0005634">
    <property type="term" value="C:nucleus"/>
    <property type="evidence" value="ECO:0007669"/>
    <property type="project" value="UniProtKB-SubCell"/>
</dbReference>
<dbReference type="GO" id="GO:0051879">
    <property type="term" value="F:Hsp90 protein binding"/>
    <property type="evidence" value="ECO:0007669"/>
    <property type="project" value="TreeGrafter"/>
</dbReference>
<dbReference type="FunFam" id="1.10.260.100:FF:000004">
    <property type="entry name" value="Putative stress-induced-phosphoprotein 1"/>
    <property type="match status" value="1"/>
</dbReference>
<dbReference type="FunFam" id="1.25.40.10:FF:000010">
    <property type="entry name" value="Stress-induced phosphoprotein 1"/>
    <property type="match status" value="1"/>
</dbReference>
<dbReference type="FunFam" id="1.25.40.10:FF:000020">
    <property type="entry name" value="Stress-induced phosphoprotein 1"/>
    <property type="match status" value="1"/>
</dbReference>
<dbReference type="FunFam" id="1.10.260.100:FF:000002">
    <property type="entry name" value="Stress-induced-phosphoprotein 1 (Hsp70/Hsp90-organizing)"/>
    <property type="match status" value="1"/>
</dbReference>
<dbReference type="FunFam" id="1.25.40.10:FF:000027">
    <property type="entry name" value="stress-induced-phosphoprotein 1 isoform X1"/>
    <property type="match status" value="1"/>
</dbReference>
<dbReference type="Gene3D" id="1.10.260.100">
    <property type="match status" value="2"/>
</dbReference>
<dbReference type="Gene3D" id="1.25.40.10">
    <property type="entry name" value="Tetratricopeptide repeat domain"/>
    <property type="match status" value="3"/>
</dbReference>
<dbReference type="InterPro" id="IPR041243">
    <property type="entry name" value="STI1/HOP_DP"/>
</dbReference>
<dbReference type="InterPro" id="IPR006636">
    <property type="entry name" value="STI1_HS-bd"/>
</dbReference>
<dbReference type="InterPro" id="IPR011990">
    <property type="entry name" value="TPR-like_helical_dom_sf"/>
</dbReference>
<dbReference type="InterPro" id="IPR019734">
    <property type="entry name" value="TPR_rpt"/>
</dbReference>
<dbReference type="PANTHER" id="PTHR22904:SF523">
    <property type="entry name" value="STRESS-INDUCED-PHOSPHOPROTEIN 1"/>
    <property type="match status" value="1"/>
</dbReference>
<dbReference type="PANTHER" id="PTHR22904">
    <property type="entry name" value="TPR REPEAT CONTAINING PROTEIN"/>
    <property type="match status" value="1"/>
</dbReference>
<dbReference type="Pfam" id="PF17830">
    <property type="entry name" value="STI1-HOP_DP"/>
    <property type="match status" value="2"/>
</dbReference>
<dbReference type="Pfam" id="PF00515">
    <property type="entry name" value="TPR_1"/>
    <property type="match status" value="2"/>
</dbReference>
<dbReference type="Pfam" id="PF13414">
    <property type="entry name" value="TPR_11"/>
    <property type="match status" value="2"/>
</dbReference>
<dbReference type="Pfam" id="PF13424">
    <property type="entry name" value="TPR_12"/>
    <property type="match status" value="1"/>
</dbReference>
<dbReference type="SMART" id="SM00727">
    <property type="entry name" value="STI1"/>
    <property type="match status" value="2"/>
</dbReference>
<dbReference type="SMART" id="SM00028">
    <property type="entry name" value="TPR"/>
    <property type="match status" value="9"/>
</dbReference>
<dbReference type="SUPFAM" id="SSF48452">
    <property type="entry name" value="TPR-like"/>
    <property type="match status" value="3"/>
</dbReference>
<dbReference type="PROSITE" id="PS50005">
    <property type="entry name" value="TPR"/>
    <property type="match status" value="9"/>
</dbReference>
<dbReference type="PROSITE" id="PS50293">
    <property type="entry name" value="TPR_REGION"/>
    <property type="match status" value="2"/>
</dbReference>
<sequence length="543" mass="62651">MEQVNELKEKGNKALSAGNIDDALQCYSEAIKLDPQNHVLYSNRSAAYAKKGDYQKAYEDGCKTVDLKPDWGKGYSRKAAALEFLNRFEEAKRTYEEGLKHEANNLQLKEGLQNMEARLAERKFMNPFNLPNLYQKLENDPRTRTLLSDPTYRELIEQLRNKPSDLGTKIQDPRIMTTLSVLLGVDLGSMDEEEEAATPPPPPPSKKEAKPEPMEEDLPENKKQALKEKEMGNEAYKKKDFDMALKHYDRAKELDPTNMTYITNQAAVHFEKGDYNKCRELCEKAIEVGRENREDYRQIAKAYARIGNSYFKEERYKDAIHFYNKSLAEHRTPDVLKKCQQAEKILKEQERLAYINPDLALEEKNKGNECFQKGDYPQAMKHYTEAIKRNPKDAKLYSNRAACYTKLLEFQLALKDCEECIQLEPTFIKGYTRKAAALEAMKDYTKAMDVYQKALELDSSCKEAADGYQRCMMAQYNRHDSPEDVKRRAMADPEVQQIMSDPAMRLILEQMQKDPQALSEHLKNPVIAQKIQKLMDVGLIAIR</sequence>
<name>STIP1_CRIGR</name>
<organism>
    <name type="scientific">Cricetulus griseus</name>
    <name type="common">Chinese hamster</name>
    <name type="synonym">Cricetulus barabensis griseus</name>
    <dbReference type="NCBI Taxonomy" id="10029"/>
    <lineage>
        <taxon>Eukaryota</taxon>
        <taxon>Metazoa</taxon>
        <taxon>Chordata</taxon>
        <taxon>Craniata</taxon>
        <taxon>Vertebrata</taxon>
        <taxon>Euteleostomi</taxon>
        <taxon>Mammalia</taxon>
        <taxon>Eutheria</taxon>
        <taxon>Euarchontoglires</taxon>
        <taxon>Glires</taxon>
        <taxon>Rodentia</taxon>
        <taxon>Myomorpha</taxon>
        <taxon>Muroidea</taxon>
        <taxon>Cricetidae</taxon>
        <taxon>Cricetinae</taxon>
        <taxon>Cricetulus</taxon>
    </lineage>
</organism>